<gene>
    <name evidence="1" type="primary">recA</name>
    <name type="ordered locus">WP0932</name>
</gene>
<organism>
    <name type="scientific">Wolbachia pipientis subsp. Culex pipiens (strain wPip)</name>
    <dbReference type="NCBI Taxonomy" id="570417"/>
    <lineage>
        <taxon>Bacteria</taxon>
        <taxon>Pseudomonadati</taxon>
        <taxon>Pseudomonadota</taxon>
        <taxon>Alphaproteobacteria</taxon>
        <taxon>Rickettsiales</taxon>
        <taxon>Anaplasmataceae</taxon>
        <taxon>Wolbachieae</taxon>
        <taxon>Wolbachia</taxon>
    </lineage>
</organism>
<name>RECA_WOLPP</name>
<proteinExistence type="inferred from homology"/>
<reference key="1">
    <citation type="journal article" date="2008" name="Mol. Biol. Evol.">
        <title>Genome evolution of Wolbachia strain wPip from the Culex pipiens group.</title>
        <authorList>
            <person name="Klasson L."/>
            <person name="Walker T."/>
            <person name="Sebaihia M."/>
            <person name="Sanders M.J."/>
            <person name="Quail M.A."/>
            <person name="Lord A."/>
            <person name="Sanders S."/>
            <person name="Earl J."/>
            <person name="O'Neill S.L."/>
            <person name="Thomson N."/>
            <person name="Sinkins S.P."/>
            <person name="Parkhill J."/>
        </authorList>
    </citation>
    <scope>NUCLEOTIDE SEQUENCE [LARGE SCALE GENOMIC DNA]</scope>
    <source>
        <strain>wPip</strain>
    </source>
</reference>
<accession>B3CMC0</accession>
<sequence>MAHNPEERNNDKQKALDNAISQIEKAFGKGAIMKLKQNPVEKIDTISTGSIALDSALGVGGLPKGRIIEIFGPESSGKTTLALHVIAEAQKKGGLCAFIDAEHALDVIYARKLGVKTDDLVISQPDTGEQALHIVEYLVCSSAVDVIVIDSVAALTPRAEIEGDMGDQHMGLQARLLSHGLRKLTSVVSKANCILIFINQIRMKIGVVYGNPETTTGGNALKFYTSIRLDIRKVGAIKDKENITGNETRVKVVKNKVAPPFREAKFDIMYNEGISKLGEIIDIGAKLGVLEKAGAYYSYNNTRLGQGRENVKSYLKANKEIASEIETKIRDLFKNHDNSIAIEEEREQLLEESVF</sequence>
<evidence type="ECO:0000255" key="1">
    <source>
        <dbReference type="HAMAP-Rule" id="MF_00268"/>
    </source>
</evidence>
<feature type="chain" id="PRO_1000114381" description="Protein RecA">
    <location>
        <begin position="1"/>
        <end position="355"/>
    </location>
</feature>
<feature type="binding site" evidence="1">
    <location>
        <begin position="72"/>
        <end position="79"/>
    </location>
    <ligand>
        <name>ATP</name>
        <dbReference type="ChEBI" id="CHEBI:30616"/>
    </ligand>
</feature>
<protein>
    <recommendedName>
        <fullName evidence="1">Protein RecA</fullName>
    </recommendedName>
    <alternativeName>
        <fullName evidence="1">Recombinase A</fullName>
    </alternativeName>
</protein>
<keyword id="KW-0067">ATP-binding</keyword>
<keyword id="KW-0963">Cytoplasm</keyword>
<keyword id="KW-0227">DNA damage</keyword>
<keyword id="KW-0233">DNA recombination</keyword>
<keyword id="KW-0234">DNA repair</keyword>
<keyword id="KW-0238">DNA-binding</keyword>
<keyword id="KW-0547">Nucleotide-binding</keyword>
<keyword id="KW-0742">SOS response</keyword>
<comment type="function">
    <text evidence="1">Can catalyze the hydrolysis of ATP in the presence of single-stranded DNA, the ATP-dependent uptake of single-stranded DNA by duplex DNA, and the ATP-dependent hybridization of homologous single-stranded DNAs. It interacts with LexA causing its activation and leading to its autocatalytic cleavage.</text>
</comment>
<comment type="subcellular location">
    <subcellularLocation>
        <location evidence="1">Cytoplasm</location>
    </subcellularLocation>
</comment>
<comment type="similarity">
    <text evidence="1">Belongs to the RecA family.</text>
</comment>
<dbReference type="EMBL" id="AM999887">
    <property type="protein sequence ID" value="CAQ55040.1"/>
    <property type="molecule type" value="Genomic_DNA"/>
</dbReference>
<dbReference type="RefSeq" id="WP_007302323.1">
    <property type="nucleotide sequence ID" value="NC_010981.1"/>
</dbReference>
<dbReference type="SMR" id="B3CMC0"/>
<dbReference type="KEGG" id="wpi:WP0932"/>
<dbReference type="eggNOG" id="COG0468">
    <property type="taxonomic scope" value="Bacteria"/>
</dbReference>
<dbReference type="HOGENOM" id="CLU_040469_3_2_5"/>
<dbReference type="Proteomes" id="UP000008814">
    <property type="component" value="Chromosome"/>
</dbReference>
<dbReference type="GO" id="GO:0005829">
    <property type="term" value="C:cytosol"/>
    <property type="evidence" value="ECO:0007669"/>
    <property type="project" value="TreeGrafter"/>
</dbReference>
<dbReference type="GO" id="GO:0005524">
    <property type="term" value="F:ATP binding"/>
    <property type="evidence" value="ECO:0007669"/>
    <property type="project" value="UniProtKB-UniRule"/>
</dbReference>
<dbReference type="GO" id="GO:0016887">
    <property type="term" value="F:ATP hydrolysis activity"/>
    <property type="evidence" value="ECO:0007669"/>
    <property type="project" value="InterPro"/>
</dbReference>
<dbReference type="GO" id="GO:0140664">
    <property type="term" value="F:ATP-dependent DNA damage sensor activity"/>
    <property type="evidence" value="ECO:0007669"/>
    <property type="project" value="InterPro"/>
</dbReference>
<dbReference type="GO" id="GO:0003684">
    <property type="term" value="F:damaged DNA binding"/>
    <property type="evidence" value="ECO:0007669"/>
    <property type="project" value="UniProtKB-UniRule"/>
</dbReference>
<dbReference type="GO" id="GO:0003697">
    <property type="term" value="F:single-stranded DNA binding"/>
    <property type="evidence" value="ECO:0007669"/>
    <property type="project" value="UniProtKB-UniRule"/>
</dbReference>
<dbReference type="GO" id="GO:0006310">
    <property type="term" value="P:DNA recombination"/>
    <property type="evidence" value="ECO:0007669"/>
    <property type="project" value="UniProtKB-UniRule"/>
</dbReference>
<dbReference type="GO" id="GO:0006281">
    <property type="term" value="P:DNA repair"/>
    <property type="evidence" value="ECO:0007669"/>
    <property type="project" value="UniProtKB-UniRule"/>
</dbReference>
<dbReference type="GO" id="GO:0009432">
    <property type="term" value="P:SOS response"/>
    <property type="evidence" value="ECO:0007669"/>
    <property type="project" value="UniProtKB-UniRule"/>
</dbReference>
<dbReference type="CDD" id="cd00983">
    <property type="entry name" value="RecA"/>
    <property type="match status" value="1"/>
</dbReference>
<dbReference type="FunFam" id="3.40.50.300:FF:000087">
    <property type="entry name" value="Recombinase RecA"/>
    <property type="match status" value="1"/>
</dbReference>
<dbReference type="Gene3D" id="3.40.50.300">
    <property type="entry name" value="P-loop containing nucleotide triphosphate hydrolases"/>
    <property type="match status" value="1"/>
</dbReference>
<dbReference type="HAMAP" id="MF_00268">
    <property type="entry name" value="RecA"/>
    <property type="match status" value="1"/>
</dbReference>
<dbReference type="InterPro" id="IPR003593">
    <property type="entry name" value="AAA+_ATPase"/>
</dbReference>
<dbReference type="InterPro" id="IPR013765">
    <property type="entry name" value="DNA_recomb/repair_RecA"/>
</dbReference>
<dbReference type="InterPro" id="IPR020584">
    <property type="entry name" value="DNA_recomb/repair_RecA_CS"/>
</dbReference>
<dbReference type="InterPro" id="IPR027417">
    <property type="entry name" value="P-loop_NTPase"/>
</dbReference>
<dbReference type="InterPro" id="IPR049261">
    <property type="entry name" value="RecA-like_C"/>
</dbReference>
<dbReference type="InterPro" id="IPR049428">
    <property type="entry name" value="RecA-like_N"/>
</dbReference>
<dbReference type="InterPro" id="IPR020588">
    <property type="entry name" value="RecA_ATP-bd"/>
</dbReference>
<dbReference type="InterPro" id="IPR023400">
    <property type="entry name" value="RecA_C_sf"/>
</dbReference>
<dbReference type="InterPro" id="IPR020587">
    <property type="entry name" value="RecA_monomer-monomer_interface"/>
</dbReference>
<dbReference type="NCBIfam" id="TIGR02012">
    <property type="entry name" value="tigrfam_recA"/>
    <property type="match status" value="1"/>
</dbReference>
<dbReference type="PANTHER" id="PTHR45900:SF1">
    <property type="entry name" value="MITOCHONDRIAL DNA REPAIR PROTEIN RECA HOMOLOG-RELATED"/>
    <property type="match status" value="1"/>
</dbReference>
<dbReference type="PANTHER" id="PTHR45900">
    <property type="entry name" value="RECA"/>
    <property type="match status" value="1"/>
</dbReference>
<dbReference type="Pfam" id="PF00154">
    <property type="entry name" value="RecA"/>
    <property type="match status" value="1"/>
</dbReference>
<dbReference type="Pfam" id="PF21096">
    <property type="entry name" value="RecA_C"/>
    <property type="match status" value="1"/>
</dbReference>
<dbReference type="PRINTS" id="PR00142">
    <property type="entry name" value="RECA"/>
</dbReference>
<dbReference type="SMART" id="SM00382">
    <property type="entry name" value="AAA"/>
    <property type="match status" value="1"/>
</dbReference>
<dbReference type="SUPFAM" id="SSF52540">
    <property type="entry name" value="P-loop containing nucleoside triphosphate hydrolases"/>
    <property type="match status" value="1"/>
</dbReference>
<dbReference type="SUPFAM" id="SSF54752">
    <property type="entry name" value="RecA protein, C-terminal domain"/>
    <property type="match status" value="1"/>
</dbReference>
<dbReference type="PROSITE" id="PS00321">
    <property type="entry name" value="RECA_1"/>
    <property type="match status" value="1"/>
</dbReference>
<dbReference type="PROSITE" id="PS50162">
    <property type="entry name" value="RECA_2"/>
    <property type="match status" value="1"/>
</dbReference>
<dbReference type="PROSITE" id="PS50163">
    <property type="entry name" value="RECA_3"/>
    <property type="match status" value="1"/>
</dbReference>